<reference key="1">
    <citation type="journal article" date="1992" name="Science">
        <title>Carnivorous plants: phylogeny and structural evolution.</title>
        <authorList>
            <person name="Albert V.A."/>
            <person name="Williams S.E."/>
            <person name="Chase M.W."/>
        </authorList>
    </citation>
    <scope>NUCLEOTIDE SEQUENCE [GENOMIC DNA]</scope>
</reference>
<dbReference type="EC" id="4.1.1.39" evidence="1"/>
<dbReference type="EMBL" id="L01926">
    <property type="protein sequence ID" value="AAA84322.2"/>
    <property type="molecule type" value="Genomic_DNA"/>
</dbReference>
<dbReference type="SMR" id="P28424"/>
<dbReference type="GO" id="GO:0009507">
    <property type="term" value="C:chloroplast"/>
    <property type="evidence" value="ECO:0007669"/>
    <property type="project" value="UniProtKB-SubCell"/>
</dbReference>
<dbReference type="GO" id="GO:0000287">
    <property type="term" value="F:magnesium ion binding"/>
    <property type="evidence" value="ECO:0007669"/>
    <property type="project" value="InterPro"/>
</dbReference>
<dbReference type="GO" id="GO:0004497">
    <property type="term" value="F:monooxygenase activity"/>
    <property type="evidence" value="ECO:0007669"/>
    <property type="project" value="UniProtKB-KW"/>
</dbReference>
<dbReference type="GO" id="GO:0016984">
    <property type="term" value="F:ribulose-bisphosphate carboxylase activity"/>
    <property type="evidence" value="ECO:0007669"/>
    <property type="project" value="UniProtKB-EC"/>
</dbReference>
<dbReference type="GO" id="GO:0009853">
    <property type="term" value="P:photorespiration"/>
    <property type="evidence" value="ECO:0007669"/>
    <property type="project" value="UniProtKB-KW"/>
</dbReference>
<dbReference type="GO" id="GO:0019253">
    <property type="term" value="P:reductive pentose-phosphate cycle"/>
    <property type="evidence" value="ECO:0007669"/>
    <property type="project" value="UniProtKB-KW"/>
</dbReference>
<dbReference type="CDD" id="cd08212">
    <property type="entry name" value="RuBisCO_large_I"/>
    <property type="match status" value="1"/>
</dbReference>
<dbReference type="FunFam" id="3.20.20.110:FF:000001">
    <property type="entry name" value="Ribulose bisphosphate carboxylase large chain"/>
    <property type="match status" value="1"/>
</dbReference>
<dbReference type="FunFam" id="3.30.70.150:FF:000001">
    <property type="entry name" value="Ribulose bisphosphate carboxylase large chain"/>
    <property type="match status" value="1"/>
</dbReference>
<dbReference type="Gene3D" id="3.20.20.110">
    <property type="entry name" value="Ribulose bisphosphate carboxylase, large subunit, C-terminal domain"/>
    <property type="match status" value="1"/>
</dbReference>
<dbReference type="Gene3D" id="3.30.70.150">
    <property type="entry name" value="RuBisCO large subunit, N-terminal domain"/>
    <property type="match status" value="1"/>
</dbReference>
<dbReference type="HAMAP" id="MF_01338">
    <property type="entry name" value="RuBisCO_L_type1"/>
    <property type="match status" value="1"/>
</dbReference>
<dbReference type="InterPro" id="IPR033966">
    <property type="entry name" value="RuBisCO"/>
</dbReference>
<dbReference type="InterPro" id="IPR020878">
    <property type="entry name" value="RuBisCo_large_chain_AS"/>
</dbReference>
<dbReference type="InterPro" id="IPR000685">
    <property type="entry name" value="RuBisCO_lsu_C"/>
</dbReference>
<dbReference type="InterPro" id="IPR036376">
    <property type="entry name" value="RuBisCO_lsu_C_sf"/>
</dbReference>
<dbReference type="InterPro" id="IPR017443">
    <property type="entry name" value="RuBisCO_lsu_fd_N"/>
</dbReference>
<dbReference type="InterPro" id="IPR036422">
    <property type="entry name" value="RuBisCO_lsu_N_sf"/>
</dbReference>
<dbReference type="InterPro" id="IPR020888">
    <property type="entry name" value="RuBisCO_lsuI"/>
</dbReference>
<dbReference type="NCBIfam" id="NF003252">
    <property type="entry name" value="PRK04208.1"/>
    <property type="match status" value="1"/>
</dbReference>
<dbReference type="PANTHER" id="PTHR42704">
    <property type="entry name" value="RIBULOSE BISPHOSPHATE CARBOXYLASE"/>
    <property type="match status" value="1"/>
</dbReference>
<dbReference type="PANTHER" id="PTHR42704:SF15">
    <property type="entry name" value="RIBULOSE BISPHOSPHATE CARBOXYLASE LARGE CHAIN"/>
    <property type="match status" value="1"/>
</dbReference>
<dbReference type="Pfam" id="PF00016">
    <property type="entry name" value="RuBisCO_large"/>
    <property type="match status" value="1"/>
</dbReference>
<dbReference type="Pfam" id="PF02788">
    <property type="entry name" value="RuBisCO_large_N"/>
    <property type="match status" value="1"/>
</dbReference>
<dbReference type="SFLD" id="SFLDG01052">
    <property type="entry name" value="RuBisCO"/>
    <property type="match status" value="1"/>
</dbReference>
<dbReference type="SFLD" id="SFLDS00014">
    <property type="entry name" value="RuBisCO"/>
    <property type="match status" value="1"/>
</dbReference>
<dbReference type="SFLD" id="SFLDG00301">
    <property type="entry name" value="RuBisCO-like_proteins"/>
    <property type="match status" value="1"/>
</dbReference>
<dbReference type="SUPFAM" id="SSF51649">
    <property type="entry name" value="RuBisCo, C-terminal domain"/>
    <property type="match status" value="1"/>
</dbReference>
<dbReference type="SUPFAM" id="SSF54966">
    <property type="entry name" value="RuBisCO, large subunit, small (N-terminal) domain"/>
    <property type="match status" value="1"/>
</dbReference>
<dbReference type="PROSITE" id="PS00157">
    <property type="entry name" value="RUBISCO_LARGE"/>
    <property type="match status" value="1"/>
</dbReference>
<organism>
    <name type="scientific">Humiria balsamifera</name>
    <name type="common">Tauroniro</name>
    <dbReference type="NCBI Taxonomy" id="4009"/>
    <lineage>
        <taxon>Eukaryota</taxon>
        <taxon>Viridiplantae</taxon>
        <taxon>Streptophyta</taxon>
        <taxon>Embryophyta</taxon>
        <taxon>Tracheophyta</taxon>
        <taxon>Spermatophyta</taxon>
        <taxon>Magnoliopsida</taxon>
        <taxon>eudicotyledons</taxon>
        <taxon>Gunneridae</taxon>
        <taxon>Pentapetalae</taxon>
        <taxon>rosids</taxon>
        <taxon>fabids</taxon>
        <taxon>Malpighiales</taxon>
        <taxon>Humiriaceae</taxon>
        <taxon>Humiria</taxon>
    </lineage>
</organism>
<proteinExistence type="inferred from homology"/>
<accession>P28424</accession>
<protein>
    <recommendedName>
        <fullName evidence="1">Ribulose bisphosphate carboxylase large chain</fullName>
        <shortName evidence="1">RuBisCO large subunit</shortName>
        <ecNumber evidence="1">4.1.1.39</ecNumber>
    </recommendedName>
</protein>
<evidence type="ECO:0000255" key="1">
    <source>
        <dbReference type="HAMAP-Rule" id="MF_01338"/>
    </source>
</evidence>
<comment type="function">
    <text evidence="1">RuBisCO catalyzes two reactions: the carboxylation of D-ribulose 1,5-bisphosphate, the primary event in carbon dioxide fixation, as well as the oxidative fragmentation of the pentose substrate in the photorespiration process. Both reactions occur simultaneously and in competition at the same active site.</text>
</comment>
<comment type="catalytic activity">
    <reaction evidence="1">
        <text>2 (2R)-3-phosphoglycerate + 2 H(+) = D-ribulose 1,5-bisphosphate + CO2 + H2O</text>
        <dbReference type="Rhea" id="RHEA:23124"/>
        <dbReference type="ChEBI" id="CHEBI:15377"/>
        <dbReference type="ChEBI" id="CHEBI:15378"/>
        <dbReference type="ChEBI" id="CHEBI:16526"/>
        <dbReference type="ChEBI" id="CHEBI:57870"/>
        <dbReference type="ChEBI" id="CHEBI:58272"/>
        <dbReference type="EC" id="4.1.1.39"/>
    </reaction>
</comment>
<comment type="catalytic activity">
    <reaction evidence="1">
        <text>D-ribulose 1,5-bisphosphate + O2 = 2-phosphoglycolate + (2R)-3-phosphoglycerate + 2 H(+)</text>
        <dbReference type="Rhea" id="RHEA:36631"/>
        <dbReference type="ChEBI" id="CHEBI:15378"/>
        <dbReference type="ChEBI" id="CHEBI:15379"/>
        <dbReference type="ChEBI" id="CHEBI:57870"/>
        <dbReference type="ChEBI" id="CHEBI:58033"/>
        <dbReference type="ChEBI" id="CHEBI:58272"/>
    </reaction>
</comment>
<comment type="cofactor">
    <cofactor evidence="1">
        <name>Mg(2+)</name>
        <dbReference type="ChEBI" id="CHEBI:18420"/>
    </cofactor>
    <text evidence="1">Binds 1 Mg(2+) ion per subunit.</text>
</comment>
<comment type="subunit">
    <text evidence="1">Heterohexadecamer of 8 large chains and 8 small chains; disulfide-linked. The disulfide link is formed within the large subunit homodimers.</text>
</comment>
<comment type="subcellular location">
    <subcellularLocation>
        <location>Plastid</location>
        <location>Chloroplast</location>
    </subcellularLocation>
</comment>
<comment type="PTM">
    <text evidence="1">The disulfide bond which can form in the large chain dimeric partners within the hexadecamer appears to be associated with oxidative stress and protein turnover.</text>
</comment>
<comment type="miscellaneous">
    <text evidence="1">The basic functional RuBisCO is composed of a large chain homodimer in a 'head-to-tail' conformation. In form I RuBisCO this homodimer is arranged in a barrel-like tetramer with the small subunits forming a tetrameric 'cap' on each end of the 'barrel'.</text>
</comment>
<comment type="similarity">
    <text evidence="1">Belongs to the RuBisCO large chain family. Type I subfamily.</text>
</comment>
<gene>
    <name evidence="1" type="primary">rbcL</name>
</gene>
<sequence length="465" mass="51563">VGFKAGVKDYKLTYYTPDYETKDTDILAAFRVTPQPGVPPEEAGAAVAAESSTGTWTTVWTDGLTSLDRYKGRCYHIEPVAGEENQYIAYVAYPLDLFEEGSVTNMFTSIVGNVFGFKALRALRLEDLRIPPAYSKTFQGPPHGIQVERDKLNKYGRPLLGCTIKPKLGLSAKNYGRAVYECLRGGLDFTKDDENVNSQPFMRWRDRFLFCAEALYKAQAETGEIKGHYLNATAGTCEEMIKRAVFARELGVPIVMHDYLTGGFTANTSLAHYCRDNGLLLHIHRAMHAVIDRQKNHGMHFRVLAKALRLSGGDHIHAGTVVGKLEGERDITLGFVDLLRDDFIEKDRSRGIYFTQDWVSLPGVIPVASGGIHVWHMPALTEIFGDDSVLQFGGGTLGHPWGNAPGAVANRVALEACVKARNEGRDLAREGNEIIREASKWSPELAAACEVWKEIKFEFPAMDTL</sequence>
<geneLocation type="chloroplast"/>
<name>RBL_HUMBA</name>
<feature type="chain" id="PRO_0000062493" description="Ribulose bisphosphate carboxylase large chain">
    <location>
        <begin position="1" status="less than"/>
        <end position="465"/>
    </location>
</feature>
<feature type="active site" description="Proton acceptor" evidence="1">
    <location>
        <position position="165"/>
    </location>
</feature>
<feature type="active site" description="Proton acceptor" evidence="1">
    <location>
        <position position="284"/>
    </location>
</feature>
<feature type="binding site" description="in homodimeric partner" evidence="1">
    <location>
        <position position="113"/>
    </location>
    <ligand>
        <name>substrate</name>
    </ligand>
</feature>
<feature type="binding site" evidence="1">
    <location>
        <position position="163"/>
    </location>
    <ligand>
        <name>substrate</name>
    </ligand>
</feature>
<feature type="binding site" evidence="1">
    <location>
        <position position="167"/>
    </location>
    <ligand>
        <name>substrate</name>
    </ligand>
</feature>
<feature type="binding site" description="via carbamate group" evidence="1">
    <location>
        <position position="191"/>
    </location>
    <ligand>
        <name>Mg(2+)</name>
        <dbReference type="ChEBI" id="CHEBI:18420"/>
    </ligand>
</feature>
<feature type="binding site" evidence="1">
    <location>
        <position position="193"/>
    </location>
    <ligand>
        <name>Mg(2+)</name>
        <dbReference type="ChEBI" id="CHEBI:18420"/>
    </ligand>
</feature>
<feature type="binding site" evidence="1">
    <location>
        <position position="194"/>
    </location>
    <ligand>
        <name>Mg(2+)</name>
        <dbReference type="ChEBI" id="CHEBI:18420"/>
    </ligand>
</feature>
<feature type="binding site" evidence="1">
    <location>
        <position position="285"/>
    </location>
    <ligand>
        <name>substrate</name>
    </ligand>
</feature>
<feature type="binding site" evidence="1">
    <location>
        <position position="317"/>
    </location>
    <ligand>
        <name>substrate</name>
    </ligand>
</feature>
<feature type="binding site" evidence="1">
    <location>
        <position position="369"/>
    </location>
    <ligand>
        <name>substrate</name>
    </ligand>
</feature>
<feature type="site" description="Transition state stabilizer" evidence="1">
    <location>
        <position position="324"/>
    </location>
</feature>
<feature type="modified residue" description="N6,N6,N6-trimethyllysine" evidence="1">
    <location>
        <position position="4"/>
    </location>
</feature>
<feature type="modified residue" description="N6-carboxylysine" evidence="1">
    <location>
        <position position="191"/>
    </location>
</feature>
<feature type="disulfide bond" description="Interchain; in linked form" evidence="1">
    <location>
        <position position="237"/>
    </location>
</feature>
<feature type="non-terminal residue">
    <location>
        <position position="1"/>
    </location>
</feature>
<keyword id="KW-0113">Calvin cycle</keyword>
<keyword id="KW-0120">Carbon dioxide fixation</keyword>
<keyword id="KW-0150">Chloroplast</keyword>
<keyword id="KW-1015">Disulfide bond</keyword>
<keyword id="KW-0456">Lyase</keyword>
<keyword id="KW-0460">Magnesium</keyword>
<keyword id="KW-0479">Metal-binding</keyword>
<keyword id="KW-0488">Methylation</keyword>
<keyword id="KW-0503">Monooxygenase</keyword>
<keyword id="KW-0560">Oxidoreductase</keyword>
<keyword id="KW-0601">Photorespiration</keyword>
<keyword id="KW-0602">Photosynthesis</keyword>
<keyword id="KW-0934">Plastid</keyword>